<protein>
    <recommendedName>
        <fullName evidence="1">Small ribosomal subunit protein uS14B</fullName>
    </recommendedName>
    <alternativeName>
        <fullName evidence="2">30S ribosomal protein S14 type Z</fullName>
    </alternativeName>
</protein>
<name>RS14Z_STAA1</name>
<accession>A7X5E4</accession>
<keyword id="KW-0479">Metal-binding</keyword>
<keyword id="KW-0687">Ribonucleoprotein</keyword>
<keyword id="KW-0689">Ribosomal protein</keyword>
<keyword id="KW-0694">RNA-binding</keyword>
<keyword id="KW-0699">rRNA-binding</keyword>
<keyword id="KW-0862">Zinc</keyword>
<comment type="function">
    <text evidence="1">Binds 16S rRNA, required for the assembly of 30S particles and may also be responsible for determining the conformation of the 16S rRNA at the A site.</text>
</comment>
<comment type="cofactor">
    <cofactor evidence="1">
        <name>Zn(2+)</name>
        <dbReference type="ChEBI" id="CHEBI:29105"/>
    </cofactor>
    <text evidence="1">Binds 1 zinc ion per subunit.</text>
</comment>
<comment type="subunit">
    <text evidence="1">Part of the 30S ribosomal subunit. Contacts proteins S3 and S10.</text>
</comment>
<comment type="similarity">
    <text evidence="1">Belongs to the universal ribosomal protein uS14 family. Zinc-binding uS14 subfamily.</text>
</comment>
<gene>
    <name evidence="1" type="primary">rpsZ</name>
    <name evidence="1" type="synonym">rpsN</name>
    <name type="ordered locus">SAHV_2221</name>
</gene>
<reference key="1">
    <citation type="journal article" date="2008" name="Antimicrob. Agents Chemother.">
        <title>Mutated response regulator graR is responsible for phenotypic conversion of Staphylococcus aureus from heterogeneous vancomycin-intermediate resistance to vancomycin-intermediate resistance.</title>
        <authorList>
            <person name="Neoh H.-M."/>
            <person name="Cui L."/>
            <person name="Yuzawa H."/>
            <person name="Takeuchi F."/>
            <person name="Matsuo M."/>
            <person name="Hiramatsu K."/>
        </authorList>
    </citation>
    <scope>NUCLEOTIDE SEQUENCE [LARGE SCALE GENOMIC DNA]</scope>
    <source>
        <strain>Mu3 / ATCC 700698</strain>
    </source>
</reference>
<organism>
    <name type="scientific">Staphylococcus aureus (strain Mu3 / ATCC 700698)</name>
    <dbReference type="NCBI Taxonomy" id="418127"/>
    <lineage>
        <taxon>Bacteria</taxon>
        <taxon>Bacillati</taxon>
        <taxon>Bacillota</taxon>
        <taxon>Bacilli</taxon>
        <taxon>Bacillales</taxon>
        <taxon>Staphylococcaceae</taxon>
        <taxon>Staphylococcus</taxon>
    </lineage>
</organism>
<dbReference type="EMBL" id="AP009324">
    <property type="protein sequence ID" value="BAF79104.1"/>
    <property type="molecule type" value="Genomic_DNA"/>
</dbReference>
<dbReference type="RefSeq" id="WP_001140799.1">
    <property type="nucleotide sequence ID" value="NZ_CTYB01000025.1"/>
</dbReference>
<dbReference type="SMR" id="A7X5E4"/>
<dbReference type="KEGG" id="saw:SAHV_2221"/>
<dbReference type="HOGENOM" id="CLU_139869_3_0_9"/>
<dbReference type="GO" id="GO:0015935">
    <property type="term" value="C:small ribosomal subunit"/>
    <property type="evidence" value="ECO:0007669"/>
    <property type="project" value="TreeGrafter"/>
</dbReference>
<dbReference type="GO" id="GO:0019843">
    <property type="term" value="F:rRNA binding"/>
    <property type="evidence" value="ECO:0007669"/>
    <property type="project" value="UniProtKB-UniRule"/>
</dbReference>
<dbReference type="GO" id="GO:0003735">
    <property type="term" value="F:structural constituent of ribosome"/>
    <property type="evidence" value="ECO:0007669"/>
    <property type="project" value="InterPro"/>
</dbReference>
<dbReference type="GO" id="GO:0008270">
    <property type="term" value="F:zinc ion binding"/>
    <property type="evidence" value="ECO:0007669"/>
    <property type="project" value="UniProtKB-UniRule"/>
</dbReference>
<dbReference type="GO" id="GO:0006412">
    <property type="term" value="P:translation"/>
    <property type="evidence" value="ECO:0007669"/>
    <property type="project" value="UniProtKB-UniRule"/>
</dbReference>
<dbReference type="FunFam" id="4.10.830.10:FF:000001">
    <property type="entry name" value="30S ribosomal protein S14 type Z"/>
    <property type="match status" value="1"/>
</dbReference>
<dbReference type="Gene3D" id="4.10.830.10">
    <property type="entry name" value="30s Ribosomal Protein S14, Chain N"/>
    <property type="match status" value="1"/>
</dbReference>
<dbReference type="HAMAP" id="MF_01364_B">
    <property type="entry name" value="Ribosomal_uS14_2_B"/>
    <property type="match status" value="1"/>
</dbReference>
<dbReference type="InterPro" id="IPR001209">
    <property type="entry name" value="Ribosomal_uS14"/>
</dbReference>
<dbReference type="InterPro" id="IPR023053">
    <property type="entry name" value="Ribosomal_uS14_bact"/>
</dbReference>
<dbReference type="InterPro" id="IPR018271">
    <property type="entry name" value="Ribosomal_uS14_CS"/>
</dbReference>
<dbReference type="InterPro" id="IPR043140">
    <property type="entry name" value="Ribosomal_uS14_sf"/>
</dbReference>
<dbReference type="NCBIfam" id="NF005974">
    <property type="entry name" value="PRK08061.1"/>
    <property type="match status" value="1"/>
</dbReference>
<dbReference type="PANTHER" id="PTHR19836">
    <property type="entry name" value="30S RIBOSOMAL PROTEIN S14"/>
    <property type="match status" value="1"/>
</dbReference>
<dbReference type="PANTHER" id="PTHR19836:SF26">
    <property type="entry name" value="SMALL RIBOSOMAL SUBUNIT PROTEIN US14B"/>
    <property type="match status" value="1"/>
</dbReference>
<dbReference type="Pfam" id="PF00253">
    <property type="entry name" value="Ribosomal_S14"/>
    <property type="match status" value="1"/>
</dbReference>
<dbReference type="SUPFAM" id="SSF57716">
    <property type="entry name" value="Glucocorticoid receptor-like (DNA-binding domain)"/>
    <property type="match status" value="1"/>
</dbReference>
<dbReference type="PROSITE" id="PS00527">
    <property type="entry name" value="RIBOSOMAL_S14"/>
    <property type="match status" value="1"/>
</dbReference>
<feature type="chain" id="PRO_1000067965" description="Small ribosomal subunit protein uS14B">
    <location>
        <begin position="1"/>
        <end position="61"/>
    </location>
</feature>
<feature type="binding site" evidence="1">
    <location>
        <position position="24"/>
    </location>
    <ligand>
        <name>Zn(2+)</name>
        <dbReference type="ChEBI" id="CHEBI:29105"/>
    </ligand>
</feature>
<feature type="binding site" evidence="1">
    <location>
        <position position="27"/>
    </location>
    <ligand>
        <name>Zn(2+)</name>
        <dbReference type="ChEBI" id="CHEBI:29105"/>
    </ligand>
</feature>
<feature type="binding site" evidence="1">
    <location>
        <position position="40"/>
    </location>
    <ligand>
        <name>Zn(2+)</name>
        <dbReference type="ChEBI" id="CHEBI:29105"/>
    </ligand>
</feature>
<feature type="binding site" evidence="1">
    <location>
        <position position="43"/>
    </location>
    <ligand>
        <name>Zn(2+)</name>
        <dbReference type="ChEBI" id="CHEBI:29105"/>
    </ligand>
</feature>
<evidence type="ECO:0000255" key="1">
    <source>
        <dbReference type="HAMAP-Rule" id="MF_01364"/>
    </source>
</evidence>
<evidence type="ECO:0000305" key="2"/>
<sequence>MAKTSMVAKQQKKQKYAVREYTRCERCGRPHSVYRKFKLCRICFRELAYKGQIPGVRKASW</sequence>
<proteinExistence type="inferred from homology"/>